<evidence type="ECO:0000255" key="1"/>
<evidence type="ECO:0000256" key="2">
    <source>
        <dbReference type="SAM" id="MobiDB-lite"/>
    </source>
</evidence>
<evidence type="ECO:0000269" key="3">
    <source>
    </source>
</evidence>
<evidence type="ECO:0000269" key="4">
    <source>
    </source>
</evidence>
<evidence type="ECO:0000269" key="5">
    <source>
    </source>
</evidence>
<evidence type="ECO:0000269" key="6">
    <source>
    </source>
</evidence>
<evidence type="ECO:0000305" key="7"/>
<name>AMN_DROME</name>
<protein>
    <recommendedName>
        <fullName>Amnesiac neuropeptides</fullName>
    </recommendedName>
    <component>
        <recommendedName>
            <fullName>Amnesiac peptide 24</fullName>
        </recommendedName>
    </component>
    <component>
        <recommendedName>
            <fullName>Amnesiac peptide 30</fullName>
        </recommendedName>
    </component>
    <component>
        <recommendedName>
            <fullName>Amnesiac peptide 56</fullName>
        </recommendedName>
    </component>
</protein>
<sequence length="180" mass="20399">MRSFCCCFYPAAVALHCVLLFYTFFLLFRASALRRRVVSGSKGSAALALCRQFEQLSASRRERAEECRTTQLRYHYHRNGAQSRSLCAAVLCCKRSYIPRPNFSCFSLVFPVGQRFAAARTRFGPTLVASWPLCNDSETKVLTKWPSCSLIGRRSVPRGQPKFSRENPRALSPSLLGEMR</sequence>
<proteinExistence type="evidence at protein level"/>
<feature type="signal peptide" evidence="1">
    <location>
        <begin position="1"/>
        <end position="32"/>
    </location>
</feature>
<feature type="propeptide" id="PRO_0000020704">
    <location>
        <begin position="33"/>
        <end position="35"/>
    </location>
</feature>
<feature type="peptide" id="PRO_0000020705" description="Amnesiac peptide 24" evidence="1">
    <location>
        <begin position="36"/>
        <end position="59"/>
    </location>
</feature>
<feature type="peptide" id="PRO_0000020706" description="Amnesiac peptide 30" evidence="1">
    <location>
        <begin position="62"/>
        <end position="93"/>
    </location>
</feature>
<feature type="peptide" id="PRO_0000020707" description="Amnesiac peptide 56" evidence="1">
    <location>
        <begin position="96"/>
        <end position="151"/>
    </location>
</feature>
<feature type="propeptide" id="PRO_0000020708">
    <location>
        <begin position="152"/>
        <end position="180"/>
    </location>
</feature>
<feature type="region of interest" description="Disordered" evidence="2">
    <location>
        <begin position="155"/>
        <end position="180"/>
    </location>
</feature>
<dbReference type="EMBL" id="U22825">
    <property type="protein sequence ID" value="AAC46587.2"/>
    <property type="status" value="ALT_FRAME"/>
    <property type="molecule type" value="mRNA"/>
</dbReference>
<dbReference type="EMBL" id="AE014298">
    <property type="protein sequence ID" value="AAF49025.1"/>
    <property type="molecule type" value="Genomic_DNA"/>
</dbReference>
<dbReference type="RefSeq" id="NP_523416.2">
    <property type="nucleotide sequence ID" value="NM_078692.2"/>
</dbReference>
<dbReference type="SMR" id="Q24049"/>
<dbReference type="BioGRID" id="59293">
    <property type="interactions" value="7"/>
</dbReference>
<dbReference type="FunCoup" id="Q24049">
    <property type="interactions" value="4"/>
</dbReference>
<dbReference type="STRING" id="7227.FBpp0074571"/>
<dbReference type="PaxDb" id="7227-FBpp0074571"/>
<dbReference type="DNASU" id="32999"/>
<dbReference type="EnsemblMetazoa" id="FBtr0074802">
    <property type="protein sequence ID" value="FBpp0074571"/>
    <property type="gene ID" value="FBgn0086782"/>
</dbReference>
<dbReference type="GeneID" id="32999"/>
<dbReference type="KEGG" id="dme:Dmel_CG11937"/>
<dbReference type="AGR" id="FB:FBgn0086782"/>
<dbReference type="CTD" id="81693"/>
<dbReference type="FlyBase" id="FBgn0086782">
    <property type="gene designation" value="amn"/>
</dbReference>
<dbReference type="VEuPathDB" id="VectorBase:FBgn0086782"/>
<dbReference type="HOGENOM" id="CLU_1497785_0_0_1"/>
<dbReference type="InParanoid" id="Q24049"/>
<dbReference type="OrthoDB" id="7855924at2759"/>
<dbReference type="BioGRID-ORCS" id="32999">
    <property type="hits" value="0 hits in 1 CRISPR screen"/>
</dbReference>
<dbReference type="GenomeRNAi" id="32999"/>
<dbReference type="PRO" id="PR:Q24049"/>
<dbReference type="Proteomes" id="UP000000803">
    <property type="component" value="Chromosome X"/>
</dbReference>
<dbReference type="Bgee" id="FBgn0086782">
    <property type="expression patterns" value="Expressed in adult oenocyte (Drosophila) in adult thorax and 249 other cell types or tissues"/>
</dbReference>
<dbReference type="ExpressionAtlas" id="Q24049">
    <property type="expression patterns" value="baseline and differential"/>
</dbReference>
<dbReference type="GO" id="GO:0005615">
    <property type="term" value="C:extracellular space"/>
    <property type="evidence" value="ECO:0000314"/>
    <property type="project" value="FlyBase"/>
</dbReference>
<dbReference type="GO" id="GO:0005184">
    <property type="term" value="F:neuropeptide hormone activity"/>
    <property type="evidence" value="ECO:0000250"/>
    <property type="project" value="FlyBase"/>
</dbReference>
<dbReference type="GO" id="GO:0007615">
    <property type="term" value="P:anesthesia-resistant memory"/>
    <property type="evidence" value="ECO:0000304"/>
    <property type="project" value="FlyBase"/>
</dbReference>
<dbReference type="GO" id="GO:0048149">
    <property type="term" value="P:behavioral response to ethanol"/>
    <property type="evidence" value="ECO:0000315"/>
    <property type="project" value="FlyBase"/>
</dbReference>
<dbReference type="GO" id="GO:0048266">
    <property type="term" value="P:behavioral response to pain"/>
    <property type="evidence" value="ECO:0000315"/>
    <property type="project" value="FlyBase"/>
</dbReference>
<dbReference type="GO" id="GO:0019933">
    <property type="term" value="P:cAMP-mediated signaling"/>
    <property type="evidence" value="ECO:0000304"/>
    <property type="project" value="FlyBase"/>
</dbReference>
<dbReference type="GO" id="GO:0007619">
    <property type="term" value="P:courtship behavior"/>
    <property type="evidence" value="ECO:0000304"/>
    <property type="project" value="FlyBase"/>
</dbReference>
<dbReference type="GO" id="GO:0007611">
    <property type="term" value="P:learning or memory"/>
    <property type="evidence" value="ECO:0000315"/>
    <property type="project" value="FlyBase"/>
</dbReference>
<dbReference type="GO" id="GO:0007616">
    <property type="term" value="P:long-term memory"/>
    <property type="evidence" value="ECO:0000304"/>
    <property type="project" value="FlyBase"/>
</dbReference>
<dbReference type="GO" id="GO:0008049">
    <property type="term" value="P:male courtship behavior"/>
    <property type="evidence" value="ECO:0000304"/>
    <property type="project" value="FlyBase"/>
</dbReference>
<dbReference type="GO" id="GO:0072375">
    <property type="term" value="P:medium-term memory"/>
    <property type="evidence" value="ECO:0000315"/>
    <property type="project" value="FlyBase"/>
</dbReference>
<dbReference type="GO" id="GO:0007613">
    <property type="term" value="P:memory"/>
    <property type="evidence" value="ECO:0000315"/>
    <property type="project" value="FlyBase"/>
</dbReference>
<dbReference type="GO" id="GO:0007218">
    <property type="term" value="P:neuropeptide signaling pathway"/>
    <property type="evidence" value="ECO:0000270"/>
    <property type="project" value="FlyBase"/>
</dbReference>
<dbReference type="GO" id="GO:0006836">
    <property type="term" value="P:neurotransmitter transport"/>
    <property type="evidence" value="ECO:0007669"/>
    <property type="project" value="UniProtKB-KW"/>
</dbReference>
<dbReference type="GO" id="GO:0008355">
    <property type="term" value="P:olfactory learning"/>
    <property type="evidence" value="ECO:0000314"/>
    <property type="project" value="FlyBase"/>
</dbReference>
<dbReference type="GO" id="GO:0042066">
    <property type="term" value="P:perineurial glial growth"/>
    <property type="evidence" value="ECO:0000315"/>
    <property type="project" value="FlyBase"/>
</dbReference>
<dbReference type="GO" id="GO:0009408">
    <property type="term" value="P:response to heat"/>
    <property type="evidence" value="ECO:0000315"/>
    <property type="project" value="FlyBase"/>
</dbReference>
<dbReference type="GO" id="GO:0040040">
    <property type="term" value="P:thermosensory behavior"/>
    <property type="evidence" value="ECO:0000315"/>
    <property type="project" value="FlyBase"/>
</dbReference>
<gene>
    <name type="primary">amn</name>
    <name type="ORF">CG11937</name>
</gene>
<organism>
    <name type="scientific">Drosophila melanogaster</name>
    <name type="common">Fruit fly</name>
    <dbReference type="NCBI Taxonomy" id="7227"/>
    <lineage>
        <taxon>Eukaryota</taxon>
        <taxon>Metazoa</taxon>
        <taxon>Ecdysozoa</taxon>
        <taxon>Arthropoda</taxon>
        <taxon>Hexapoda</taxon>
        <taxon>Insecta</taxon>
        <taxon>Pterygota</taxon>
        <taxon>Neoptera</taxon>
        <taxon>Endopterygota</taxon>
        <taxon>Diptera</taxon>
        <taxon>Brachycera</taxon>
        <taxon>Muscomorpha</taxon>
        <taxon>Ephydroidea</taxon>
        <taxon>Drosophilidae</taxon>
        <taxon>Drosophila</taxon>
        <taxon>Sophophora</taxon>
    </lineage>
</organism>
<keyword id="KW-0165">Cleavage on pair of basic residues</keyword>
<keyword id="KW-0217">Developmental protein</keyword>
<keyword id="KW-0221">Differentiation</keyword>
<keyword id="KW-0524">Neurogenesis</keyword>
<keyword id="KW-0527">Neuropeptide</keyword>
<keyword id="KW-0532">Neurotransmitter transport</keyword>
<keyword id="KW-1185">Reference proteome</keyword>
<keyword id="KW-0964">Secreted</keyword>
<keyword id="KW-0732">Signal</keyword>
<keyword id="KW-0813">Transport</keyword>
<comment type="function">
    <text evidence="3 4 5">Required for associative learning and memory in adults. Expression pattern suggests a modulatory role in memory formation. Controls neurotransmitter-mediated signaling pathways associated with the structure of the larval peripheral nerve.</text>
</comment>
<comment type="subcellular location">
    <subcellularLocation>
        <location evidence="7">Secreted</location>
    </subcellularLocation>
</comment>
<comment type="tissue specificity">
    <text evidence="3 4">Enriched expression in the embryonic and larval nervous systems. Strongly expressed in two large neurons that project over all the lobes of the mushroom bodies.</text>
</comment>
<comment type="disruption phenotype">
    <text evidence="6">Increased growth of the perineurial glial layer of the larval peripheral nerve.</text>
</comment>
<comment type="sequence caution" evidence="7">
    <conflict type="frameshift">
        <sequence resource="EMBL-CDS" id="AAC46587"/>
    </conflict>
</comment>
<reference key="1">
    <citation type="journal article" date="1995" name="Science">
        <title>A neuropeptide gene defined by the Drosophila memory mutant amnesiac.</title>
        <authorList>
            <person name="Feany M.B."/>
            <person name="Quinn W.G."/>
        </authorList>
    </citation>
    <scope>NUCLEOTIDE SEQUENCE [MRNA]</scope>
    <source>
        <strain>Canton-S</strain>
        <strain>Oregon-R</strain>
        <tissue>Head</tissue>
    </source>
</reference>
<reference key="2">
    <citation type="journal article" date="2000" name="Science">
        <title>The genome sequence of Drosophila melanogaster.</title>
        <authorList>
            <person name="Adams M.D."/>
            <person name="Celniker S.E."/>
            <person name="Holt R.A."/>
            <person name="Evans C.A."/>
            <person name="Gocayne J.D."/>
            <person name="Amanatides P.G."/>
            <person name="Scherer S.E."/>
            <person name="Li P.W."/>
            <person name="Hoskins R.A."/>
            <person name="Galle R.F."/>
            <person name="George R.A."/>
            <person name="Lewis S.E."/>
            <person name="Richards S."/>
            <person name="Ashburner M."/>
            <person name="Henderson S.N."/>
            <person name="Sutton G.G."/>
            <person name="Wortman J.R."/>
            <person name="Yandell M.D."/>
            <person name="Zhang Q."/>
            <person name="Chen L.X."/>
            <person name="Brandon R.C."/>
            <person name="Rogers Y.-H.C."/>
            <person name="Blazej R.G."/>
            <person name="Champe M."/>
            <person name="Pfeiffer B.D."/>
            <person name="Wan K.H."/>
            <person name="Doyle C."/>
            <person name="Baxter E.G."/>
            <person name="Helt G."/>
            <person name="Nelson C.R."/>
            <person name="Miklos G.L.G."/>
            <person name="Abril J.F."/>
            <person name="Agbayani A."/>
            <person name="An H.-J."/>
            <person name="Andrews-Pfannkoch C."/>
            <person name="Baldwin D."/>
            <person name="Ballew R.M."/>
            <person name="Basu A."/>
            <person name="Baxendale J."/>
            <person name="Bayraktaroglu L."/>
            <person name="Beasley E.M."/>
            <person name="Beeson K.Y."/>
            <person name="Benos P.V."/>
            <person name="Berman B.P."/>
            <person name="Bhandari D."/>
            <person name="Bolshakov S."/>
            <person name="Borkova D."/>
            <person name="Botchan M.R."/>
            <person name="Bouck J."/>
            <person name="Brokstein P."/>
            <person name="Brottier P."/>
            <person name="Burtis K.C."/>
            <person name="Busam D.A."/>
            <person name="Butler H."/>
            <person name="Cadieu E."/>
            <person name="Center A."/>
            <person name="Chandra I."/>
            <person name="Cherry J.M."/>
            <person name="Cawley S."/>
            <person name="Dahlke C."/>
            <person name="Davenport L.B."/>
            <person name="Davies P."/>
            <person name="de Pablos B."/>
            <person name="Delcher A."/>
            <person name="Deng Z."/>
            <person name="Mays A.D."/>
            <person name="Dew I."/>
            <person name="Dietz S.M."/>
            <person name="Dodson K."/>
            <person name="Doup L.E."/>
            <person name="Downes M."/>
            <person name="Dugan-Rocha S."/>
            <person name="Dunkov B.C."/>
            <person name="Dunn P."/>
            <person name="Durbin K.J."/>
            <person name="Evangelista C.C."/>
            <person name="Ferraz C."/>
            <person name="Ferriera S."/>
            <person name="Fleischmann W."/>
            <person name="Fosler C."/>
            <person name="Gabrielian A.E."/>
            <person name="Garg N.S."/>
            <person name="Gelbart W.M."/>
            <person name="Glasser K."/>
            <person name="Glodek A."/>
            <person name="Gong F."/>
            <person name="Gorrell J.H."/>
            <person name="Gu Z."/>
            <person name="Guan P."/>
            <person name="Harris M."/>
            <person name="Harris N.L."/>
            <person name="Harvey D.A."/>
            <person name="Heiman T.J."/>
            <person name="Hernandez J.R."/>
            <person name="Houck J."/>
            <person name="Hostin D."/>
            <person name="Houston K.A."/>
            <person name="Howland T.J."/>
            <person name="Wei M.-H."/>
            <person name="Ibegwam C."/>
            <person name="Jalali M."/>
            <person name="Kalush F."/>
            <person name="Karpen G.H."/>
            <person name="Ke Z."/>
            <person name="Kennison J.A."/>
            <person name="Ketchum K.A."/>
            <person name="Kimmel B.E."/>
            <person name="Kodira C.D."/>
            <person name="Kraft C.L."/>
            <person name="Kravitz S."/>
            <person name="Kulp D."/>
            <person name="Lai Z."/>
            <person name="Lasko P."/>
            <person name="Lei Y."/>
            <person name="Levitsky A.A."/>
            <person name="Li J.H."/>
            <person name="Li Z."/>
            <person name="Liang Y."/>
            <person name="Lin X."/>
            <person name="Liu X."/>
            <person name="Mattei B."/>
            <person name="McIntosh T.C."/>
            <person name="McLeod M.P."/>
            <person name="McPherson D."/>
            <person name="Merkulov G."/>
            <person name="Milshina N.V."/>
            <person name="Mobarry C."/>
            <person name="Morris J."/>
            <person name="Moshrefi A."/>
            <person name="Mount S.M."/>
            <person name="Moy M."/>
            <person name="Murphy B."/>
            <person name="Murphy L."/>
            <person name="Muzny D.M."/>
            <person name="Nelson D.L."/>
            <person name="Nelson D.R."/>
            <person name="Nelson K.A."/>
            <person name="Nixon K."/>
            <person name="Nusskern D.R."/>
            <person name="Pacleb J.M."/>
            <person name="Palazzolo M."/>
            <person name="Pittman G.S."/>
            <person name="Pan S."/>
            <person name="Pollard J."/>
            <person name="Puri V."/>
            <person name="Reese M.G."/>
            <person name="Reinert K."/>
            <person name="Remington K."/>
            <person name="Saunders R.D.C."/>
            <person name="Scheeler F."/>
            <person name="Shen H."/>
            <person name="Shue B.C."/>
            <person name="Siden-Kiamos I."/>
            <person name="Simpson M."/>
            <person name="Skupski M.P."/>
            <person name="Smith T.J."/>
            <person name="Spier E."/>
            <person name="Spradling A.C."/>
            <person name="Stapleton M."/>
            <person name="Strong R."/>
            <person name="Sun E."/>
            <person name="Svirskas R."/>
            <person name="Tector C."/>
            <person name="Turner R."/>
            <person name="Venter E."/>
            <person name="Wang A.H."/>
            <person name="Wang X."/>
            <person name="Wang Z.-Y."/>
            <person name="Wassarman D.A."/>
            <person name="Weinstock G.M."/>
            <person name="Weissenbach J."/>
            <person name="Williams S.M."/>
            <person name="Woodage T."/>
            <person name="Worley K.C."/>
            <person name="Wu D."/>
            <person name="Yang S."/>
            <person name="Yao Q.A."/>
            <person name="Ye J."/>
            <person name="Yeh R.-F."/>
            <person name="Zaveri J.S."/>
            <person name="Zhan M."/>
            <person name="Zhang G."/>
            <person name="Zhao Q."/>
            <person name="Zheng L."/>
            <person name="Zheng X.H."/>
            <person name="Zhong F.N."/>
            <person name="Zhong W."/>
            <person name="Zhou X."/>
            <person name="Zhu S.C."/>
            <person name="Zhu X."/>
            <person name="Smith H.O."/>
            <person name="Gibbs R.A."/>
            <person name="Myers E.W."/>
            <person name="Rubin G.M."/>
            <person name="Venter J.C."/>
        </authorList>
    </citation>
    <scope>NUCLEOTIDE SEQUENCE [LARGE SCALE GENOMIC DNA]</scope>
    <source>
        <strain>Berkeley</strain>
    </source>
</reference>
<reference key="3">
    <citation type="journal article" date="2002" name="Genome Biol.">
        <title>Annotation of the Drosophila melanogaster euchromatic genome: a systematic review.</title>
        <authorList>
            <person name="Misra S."/>
            <person name="Crosby M.A."/>
            <person name="Mungall C.J."/>
            <person name="Matthews B.B."/>
            <person name="Campbell K.S."/>
            <person name="Hradecky P."/>
            <person name="Huang Y."/>
            <person name="Kaminker J.S."/>
            <person name="Millburn G.H."/>
            <person name="Prochnik S.E."/>
            <person name="Smith C.D."/>
            <person name="Tupy J.L."/>
            <person name="Whitfield E.J."/>
            <person name="Bayraktaroglu L."/>
            <person name="Berman B.P."/>
            <person name="Bettencourt B.R."/>
            <person name="Celniker S.E."/>
            <person name="de Grey A.D.N.J."/>
            <person name="Drysdale R.A."/>
            <person name="Harris N.L."/>
            <person name="Richter J."/>
            <person name="Russo S."/>
            <person name="Schroeder A.J."/>
            <person name="Shu S.Q."/>
            <person name="Stapleton M."/>
            <person name="Yamada C."/>
            <person name="Ashburner M."/>
            <person name="Gelbart W.M."/>
            <person name="Rubin G.M."/>
            <person name="Lewis S.E."/>
        </authorList>
    </citation>
    <scope>GENOME REANNOTATION</scope>
    <source>
        <strain>Berkeley</strain>
    </source>
</reference>
<reference key="4">
    <citation type="journal article" date="1999" name="J. Neurosci.">
        <title>Developmental expression of an amn(+) transgene rescues the mutant memory defect of amnesiac adults.</title>
        <authorList>
            <person name="DeZazzo J."/>
            <person name="Xia S."/>
            <person name="Christensen J."/>
            <person name="Velinzon K."/>
            <person name="Tully T."/>
        </authorList>
    </citation>
    <scope>FUNCTION</scope>
    <scope>TISSUE SPECIFICITY</scope>
</reference>
<reference key="5">
    <citation type="journal article" date="2000" name="Cell">
        <title>The amnesiac gene product is expressed in two neurons in the Drosophila brain that are critical for memory.</title>
        <authorList>
            <person name="Waddell S."/>
            <person name="Armstrong J.D."/>
            <person name="Kitamoto T."/>
            <person name="Kaiser K."/>
            <person name="Quinn W.G."/>
        </authorList>
    </citation>
    <scope>FUNCTION</scope>
    <scope>TISSUE SPECIFICITY</scope>
</reference>
<reference key="6">
    <citation type="journal article" date="2001" name="Proc. Natl. Acad. Sci. U.S.A.">
        <title>Control of Drosophila perineurial glial growth by interacting neurotransmitter-mediated signaling pathways.</title>
        <authorList>
            <person name="Yager J."/>
            <person name="Richards S."/>
            <person name="Hekmat-Scafe D.S."/>
            <person name="Hurd D.D."/>
            <person name="Sundaresan V."/>
            <person name="Caprette D.R."/>
            <person name="Saxton W.M."/>
            <person name="Carlson J.R."/>
            <person name="Stern M."/>
        </authorList>
    </citation>
    <scope>FUNCTION</scope>
</reference>
<reference key="7">
    <citation type="journal article" date="2002" name="Biochem. Biophys. Res. Commun.">
        <title>Higher brain functions of PACAP and a homologous Drosophila memory gene amnesiac: insights from knockouts and mutants.</title>
        <authorList>
            <person name="Hashimoto H."/>
            <person name="Shintani N."/>
            <person name="Baba A."/>
        </authorList>
    </citation>
    <scope>PROTEOLYTIC PROCESSING</scope>
    <scope>DISRUPTION PHENOTYPE</scope>
</reference>
<accession>Q24049</accession>
<accession>Q9VWC1</accession>